<comment type="function">
    <text evidence="1">Mitochondrial GTPase involved in mitochondrial trafficking. Probably involved in control of anterograde transport of mitochondria and their subcellular distribution.</text>
</comment>
<comment type="subcellular location">
    <subcellularLocation>
        <location evidence="1">Mitochondrion outer membrane</location>
        <topology evidence="1">Single-pass type IV membrane protein</topology>
    </subcellularLocation>
</comment>
<comment type="similarity">
    <text evidence="4 5">Belongs to the mitochondrial Rho GTPase family.</text>
</comment>
<reference key="1">
    <citation type="journal article" date="2004" name="Nature">
        <title>Genome evolution in yeasts.</title>
        <authorList>
            <person name="Dujon B."/>
            <person name="Sherman D."/>
            <person name="Fischer G."/>
            <person name="Durrens P."/>
            <person name="Casaregola S."/>
            <person name="Lafontaine I."/>
            <person name="de Montigny J."/>
            <person name="Marck C."/>
            <person name="Neuveglise C."/>
            <person name="Talla E."/>
            <person name="Goffard N."/>
            <person name="Frangeul L."/>
            <person name="Aigle M."/>
            <person name="Anthouard V."/>
            <person name="Babour A."/>
            <person name="Barbe V."/>
            <person name="Barnay S."/>
            <person name="Blanchin S."/>
            <person name="Beckerich J.-M."/>
            <person name="Beyne E."/>
            <person name="Bleykasten C."/>
            <person name="Boisrame A."/>
            <person name="Boyer J."/>
            <person name="Cattolico L."/>
            <person name="Confanioleri F."/>
            <person name="de Daruvar A."/>
            <person name="Despons L."/>
            <person name="Fabre E."/>
            <person name="Fairhead C."/>
            <person name="Ferry-Dumazet H."/>
            <person name="Groppi A."/>
            <person name="Hantraye F."/>
            <person name="Hennequin C."/>
            <person name="Jauniaux N."/>
            <person name="Joyet P."/>
            <person name="Kachouri R."/>
            <person name="Kerrest A."/>
            <person name="Koszul R."/>
            <person name="Lemaire M."/>
            <person name="Lesur I."/>
            <person name="Ma L."/>
            <person name="Muller H."/>
            <person name="Nicaud J.-M."/>
            <person name="Nikolski M."/>
            <person name="Oztas S."/>
            <person name="Ozier-Kalogeropoulos O."/>
            <person name="Pellenz S."/>
            <person name="Potier S."/>
            <person name="Richard G.-F."/>
            <person name="Straub M.-L."/>
            <person name="Suleau A."/>
            <person name="Swennen D."/>
            <person name="Tekaia F."/>
            <person name="Wesolowski-Louvel M."/>
            <person name="Westhof E."/>
            <person name="Wirth B."/>
            <person name="Zeniou-Meyer M."/>
            <person name="Zivanovic Y."/>
            <person name="Bolotin-Fukuhara M."/>
            <person name="Thierry A."/>
            <person name="Bouchier C."/>
            <person name="Caudron B."/>
            <person name="Scarpelli C."/>
            <person name="Gaillardin C."/>
            <person name="Weissenbach J."/>
            <person name="Wincker P."/>
            <person name="Souciet J.-L."/>
        </authorList>
    </citation>
    <scope>NUCLEOTIDE SEQUENCE [LARGE SCALE GENOMIC DNA]</scope>
    <source>
        <strain>CLIB 122 / E 150</strain>
    </source>
</reference>
<sequence length="665" mass="74883">MTNDVIRIVVCGDEGVGKSSLITSLIKDTYVPNIQKLLPPITIPKGFSSSPDAPLSTVIVDTQFSNSPAEAEHLHREIRQANVIWLVYSDHYSCERVSIFWLPYFRNLGVNLPIVLCANVFDDVDSWNSRDSERIISDEMIPILREFKEIESCIRVSAKLNHNINQAFYLCQKAVMHPIAPLFDAKEGKLKPNAVAALQRVFFLSDRDQDGYLSDQEMLELQVKCFGRSFDATDLIQIRAQLAKINPALATERGVSEEGFITLNRLYADKGRHETTWGILRTFHYTDYLSLSDQFLYPKLDVPENSSVELSPEGYRFLVDLFLLFDKDNDGGLNDSELKTLFKPTPGIPQKWLDFNFPYTTVHDEQGSITLQGWLALWSMTTFLDYKTTMAYLAYLGFEGDNSKKRFSGSSVTVAMTTAAAAAARLTAFKVTKPKKRRSRPRPYYRATPNDRSVFNCFVLGSHMSGKTSLLEAFLNRPLMTDIYKPTIRPVSVVNSVEMTGGKQCYMVMEELGQQEAAVLSNAARLEECDVICYTYDSSDPNSFSYIDGLRRKYPVLDTLPCVFVALKADNDRQQQRFDLQPDEYTKQIRIAAPLHVSSKWPSSVTELFIQLAEAAQQPGRGLPNQDPEEETNTIMPFALAGGATVLLAAAVAWIFKNVRVAGRE</sequence>
<feature type="chain" id="PRO_0000239341" description="Mitochondrial Rho GTPase 1">
    <location>
        <begin position="1"/>
        <end position="665"/>
    </location>
</feature>
<feature type="topological domain" description="Cytoplasmic" evidence="2">
    <location>
        <begin position="1"/>
        <end position="634"/>
    </location>
</feature>
<feature type="transmembrane region" description="Helical; Anchor for type IV membrane protein" evidence="2">
    <location>
        <begin position="635"/>
        <end position="655"/>
    </location>
</feature>
<feature type="topological domain" description="Mitochondrial intermembrane" evidence="2">
    <location>
        <begin position="656"/>
        <end position="665"/>
    </location>
</feature>
<feature type="domain" description="Miro 1" evidence="4">
    <location>
        <begin position="3"/>
        <end position="177"/>
    </location>
</feature>
<feature type="domain" description="EF-hand 1" evidence="3">
    <location>
        <begin position="193"/>
        <end position="228"/>
    </location>
</feature>
<feature type="domain" description="EF-hand 2" evidence="3">
    <location>
        <begin position="313"/>
        <end position="348"/>
    </location>
</feature>
<feature type="domain" description="Miro 2" evidence="4">
    <location>
        <begin position="452"/>
        <end position="618"/>
    </location>
</feature>
<feature type="binding site" evidence="2">
    <location>
        <begin position="12"/>
        <end position="19"/>
    </location>
    <ligand>
        <name>GTP</name>
        <dbReference type="ChEBI" id="CHEBI:37565"/>
        <label>1</label>
    </ligand>
</feature>
<feature type="binding site" evidence="2">
    <location>
        <begin position="61"/>
        <end position="67"/>
    </location>
    <ligand>
        <name>GTP</name>
        <dbReference type="ChEBI" id="CHEBI:37565"/>
        <label>1</label>
    </ligand>
</feature>
<feature type="binding site" evidence="2">
    <location>
        <begin position="119"/>
        <end position="122"/>
    </location>
    <ligand>
        <name>GTP</name>
        <dbReference type="ChEBI" id="CHEBI:37565"/>
        <label>1</label>
    </ligand>
</feature>
<feature type="binding site" evidence="3">
    <location>
        <position position="206"/>
    </location>
    <ligand>
        <name>Ca(2+)</name>
        <dbReference type="ChEBI" id="CHEBI:29108"/>
        <label>1</label>
    </ligand>
</feature>
<feature type="binding site" evidence="3">
    <location>
        <position position="208"/>
    </location>
    <ligand>
        <name>Ca(2+)</name>
        <dbReference type="ChEBI" id="CHEBI:29108"/>
        <label>1</label>
    </ligand>
</feature>
<feature type="binding site" evidence="3">
    <location>
        <position position="210"/>
    </location>
    <ligand>
        <name>Ca(2+)</name>
        <dbReference type="ChEBI" id="CHEBI:29108"/>
        <label>1</label>
    </ligand>
</feature>
<feature type="binding site" evidence="3">
    <location>
        <position position="212"/>
    </location>
    <ligand>
        <name>Ca(2+)</name>
        <dbReference type="ChEBI" id="CHEBI:29108"/>
        <label>1</label>
    </ligand>
</feature>
<feature type="binding site" evidence="3">
    <location>
        <position position="217"/>
    </location>
    <ligand>
        <name>Ca(2+)</name>
        <dbReference type="ChEBI" id="CHEBI:29108"/>
        <label>1</label>
    </ligand>
</feature>
<feature type="binding site" evidence="5">
    <location>
        <position position="326"/>
    </location>
    <ligand>
        <name>Ca(2+)</name>
        <dbReference type="ChEBI" id="CHEBI:29108"/>
        <label>2</label>
    </ligand>
</feature>
<feature type="binding site" evidence="5">
    <location>
        <position position="328"/>
    </location>
    <ligand>
        <name>Ca(2+)</name>
        <dbReference type="ChEBI" id="CHEBI:29108"/>
        <label>2</label>
    </ligand>
</feature>
<feature type="binding site" evidence="5">
    <location>
        <position position="330"/>
    </location>
    <ligand>
        <name>Ca(2+)</name>
        <dbReference type="ChEBI" id="CHEBI:29108"/>
        <label>2</label>
    </ligand>
</feature>
<feature type="binding site" evidence="5">
    <location>
        <position position="337"/>
    </location>
    <ligand>
        <name>Ca(2+)</name>
        <dbReference type="ChEBI" id="CHEBI:29108"/>
        <label>2</label>
    </ligand>
</feature>
<feature type="binding site" evidence="2">
    <location>
        <begin position="461"/>
        <end position="468"/>
    </location>
    <ligand>
        <name>GTP</name>
        <dbReference type="ChEBI" id="CHEBI:37565"/>
        <label>2</label>
    </ligand>
</feature>
<feature type="binding site" evidence="2">
    <location>
        <begin position="498"/>
        <end position="502"/>
    </location>
    <ligand>
        <name>GTP</name>
        <dbReference type="ChEBI" id="CHEBI:37565"/>
        <label>2</label>
    </ligand>
</feature>
<feature type="binding site" evidence="2">
    <location>
        <begin position="567"/>
        <end position="570"/>
    </location>
    <ligand>
        <name>GTP</name>
        <dbReference type="ChEBI" id="CHEBI:37565"/>
        <label>2</label>
    </ligand>
</feature>
<gene>
    <name type="primary">GEM1</name>
    <name type="ordered locus">YALI0F07491g</name>
</gene>
<evidence type="ECO:0000250" key="1">
    <source>
        <dbReference type="UniProtKB" id="P39722"/>
    </source>
</evidence>
<evidence type="ECO:0000255" key="2"/>
<evidence type="ECO:0000255" key="3">
    <source>
        <dbReference type="PROSITE-ProRule" id="PRU00448"/>
    </source>
</evidence>
<evidence type="ECO:0000255" key="4">
    <source>
        <dbReference type="PROSITE-ProRule" id="PRU00757"/>
    </source>
</evidence>
<evidence type="ECO:0000305" key="5"/>
<organism>
    <name type="scientific">Yarrowia lipolytica (strain CLIB 122 / E 150)</name>
    <name type="common">Yeast</name>
    <name type="synonym">Candida lipolytica</name>
    <dbReference type="NCBI Taxonomy" id="284591"/>
    <lineage>
        <taxon>Eukaryota</taxon>
        <taxon>Fungi</taxon>
        <taxon>Dikarya</taxon>
        <taxon>Ascomycota</taxon>
        <taxon>Saccharomycotina</taxon>
        <taxon>Dipodascomycetes</taxon>
        <taxon>Dipodascales</taxon>
        <taxon>Dipodascales incertae sedis</taxon>
        <taxon>Yarrowia</taxon>
    </lineage>
</organism>
<proteinExistence type="inferred from homology"/>
<keyword id="KW-0106">Calcium</keyword>
<keyword id="KW-0342">GTP-binding</keyword>
<keyword id="KW-0378">Hydrolase</keyword>
<keyword id="KW-0472">Membrane</keyword>
<keyword id="KW-0479">Metal-binding</keyword>
<keyword id="KW-0496">Mitochondrion</keyword>
<keyword id="KW-1000">Mitochondrion outer membrane</keyword>
<keyword id="KW-0547">Nucleotide-binding</keyword>
<keyword id="KW-1185">Reference proteome</keyword>
<keyword id="KW-0677">Repeat</keyword>
<keyword id="KW-0812">Transmembrane</keyword>
<keyword id="KW-1133">Transmembrane helix</keyword>
<dbReference type="EC" id="3.6.5.-"/>
<dbReference type="EMBL" id="CR382132">
    <property type="protein sequence ID" value="CAG77928.1"/>
    <property type="molecule type" value="Genomic_DNA"/>
</dbReference>
<dbReference type="RefSeq" id="XP_505121.1">
    <property type="nucleotide sequence ID" value="XM_505121.1"/>
</dbReference>
<dbReference type="SMR" id="Q6C2J1"/>
<dbReference type="FunCoup" id="Q6C2J1">
    <property type="interactions" value="832"/>
</dbReference>
<dbReference type="STRING" id="284591.Q6C2J1"/>
<dbReference type="EnsemblFungi" id="CAG77928">
    <property type="protein sequence ID" value="CAG77928"/>
    <property type="gene ID" value="YALI0_F07491g"/>
</dbReference>
<dbReference type="KEGG" id="yli:2908415"/>
<dbReference type="VEuPathDB" id="FungiDB:YALI0_F07491g"/>
<dbReference type="HOGENOM" id="CLU_014255_3_0_1"/>
<dbReference type="InParanoid" id="Q6C2J1"/>
<dbReference type="OMA" id="HETTWGI"/>
<dbReference type="OrthoDB" id="110451at4891"/>
<dbReference type="Proteomes" id="UP000001300">
    <property type="component" value="Chromosome F"/>
</dbReference>
<dbReference type="GO" id="GO:0032865">
    <property type="term" value="C:ERMES complex"/>
    <property type="evidence" value="ECO:0007669"/>
    <property type="project" value="EnsemblFungi"/>
</dbReference>
<dbReference type="GO" id="GO:0005741">
    <property type="term" value="C:mitochondrial outer membrane"/>
    <property type="evidence" value="ECO:0000318"/>
    <property type="project" value="GO_Central"/>
</dbReference>
<dbReference type="GO" id="GO:0005509">
    <property type="term" value="F:calcium ion binding"/>
    <property type="evidence" value="ECO:0007669"/>
    <property type="project" value="EnsemblFungi"/>
</dbReference>
<dbReference type="GO" id="GO:0005525">
    <property type="term" value="F:GTP binding"/>
    <property type="evidence" value="ECO:0000318"/>
    <property type="project" value="GO_Central"/>
</dbReference>
<dbReference type="GO" id="GO:0003924">
    <property type="term" value="F:GTPase activity"/>
    <property type="evidence" value="ECO:0000318"/>
    <property type="project" value="GO_Central"/>
</dbReference>
<dbReference type="GO" id="GO:0015886">
    <property type="term" value="P:heme transport"/>
    <property type="evidence" value="ECO:0007669"/>
    <property type="project" value="EnsemblFungi"/>
</dbReference>
<dbReference type="GO" id="GO:0000001">
    <property type="term" value="P:mitochondrion inheritance"/>
    <property type="evidence" value="ECO:0007669"/>
    <property type="project" value="EnsemblFungi"/>
</dbReference>
<dbReference type="GO" id="GO:0007005">
    <property type="term" value="P:mitochondrion organization"/>
    <property type="evidence" value="ECO:0000318"/>
    <property type="project" value="GO_Central"/>
</dbReference>
<dbReference type="GO" id="GO:1990456">
    <property type="term" value="P:mitochondrion-endoplasmic reticulum membrane tethering"/>
    <property type="evidence" value="ECO:0007669"/>
    <property type="project" value="EnsemblFungi"/>
</dbReference>
<dbReference type="GO" id="GO:0055091">
    <property type="term" value="P:phospholipid homeostasis"/>
    <property type="evidence" value="ECO:0007669"/>
    <property type="project" value="EnsemblFungi"/>
</dbReference>
<dbReference type="GO" id="GO:0010821">
    <property type="term" value="P:regulation of mitochondrion organization"/>
    <property type="evidence" value="ECO:0007669"/>
    <property type="project" value="EnsemblFungi"/>
</dbReference>
<dbReference type="CDD" id="cd01892">
    <property type="entry name" value="Miro2"/>
    <property type="match status" value="1"/>
</dbReference>
<dbReference type="FunFam" id="1.10.238.10:FF:000185">
    <property type="entry name" value="Mitochondrial Rho GTPase"/>
    <property type="match status" value="1"/>
</dbReference>
<dbReference type="FunFam" id="3.40.50.300:FF:000553">
    <property type="entry name" value="Mitochondrial Rho GTPase"/>
    <property type="match status" value="1"/>
</dbReference>
<dbReference type="FunFam" id="3.40.50.300:FF:000572">
    <property type="entry name" value="Mitochondrial Rho GTPase"/>
    <property type="match status" value="1"/>
</dbReference>
<dbReference type="Gene3D" id="1.10.238.10">
    <property type="entry name" value="EF-hand"/>
    <property type="match status" value="2"/>
</dbReference>
<dbReference type="Gene3D" id="3.40.50.300">
    <property type="entry name" value="P-loop containing nucleotide triphosphate hydrolases"/>
    <property type="match status" value="2"/>
</dbReference>
<dbReference type="InterPro" id="IPR011992">
    <property type="entry name" value="EF-hand-dom_pair"/>
</dbReference>
<dbReference type="InterPro" id="IPR018247">
    <property type="entry name" value="EF_Hand_1_Ca_BS"/>
</dbReference>
<dbReference type="InterPro" id="IPR013566">
    <property type="entry name" value="EF_hand_assoc_1"/>
</dbReference>
<dbReference type="InterPro" id="IPR013567">
    <property type="entry name" value="EF_hand_assoc_2"/>
</dbReference>
<dbReference type="InterPro" id="IPR002048">
    <property type="entry name" value="EF_hand_dom"/>
</dbReference>
<dbReference type="InterPro" id="IPR021181">
    <property type="entry name" value="Miro"/>
</dbReference>
<dbReference type="InterPro" id="IPR052266">
    <property type="entry name" value="Miro-EF-hand_domain"/>
</dbReference>
<dbReference type="InterPro" id="IPR020860">
    <property type="entry name" value="MIRO_dom"/>
</dbReference>
<dbReference type="InterPro" id="IPR027417">
    <property type="entry name" value="P-loop_NTPase"/>
</dbReference>
<dbReference type="InterPro" id="IPR001806">
    <property type="entry name" value="Small_GTPase"/>
</dbReference>
<dbReference type="PANTHER" id="PTHR46819">
    <property type="entry name" value="EF-HAND CALCIUM-BINDING DOMAIN-CONTAINING PROTEIN 7"/>
    <property type="match status" value="1"/>
</dbReference>
<dbReference type="PANTHER" id="PTHR46819:SF1">
    <property type="entry name" value="EF-HAND CALCIUM-BINDING DOMAIN-CONTAINING PROTEIN 7"/>
    <property type="match status" value="1"/>
</dbReference>
<dbReference type="Pfam" id="PF08355">
    <property type="entry name" value="EF_assoc_1"/>
    <property type="match status" value="1"/>
</dbReference>
<dbReference type="Pfam" id="PF08356">
    <property type="entry name" value="EF_assoc_2"/>
    <property type="match status" value="1"/>
</dbReference>
<dbReference type="Pfam" id="PF00071">
    <property type="entry name" value="Ras"/>
    <property type="match status" value="2"/>
</dbReference>
<dbReference type="PIRSF" id="PIRSF037488">
    <property type="entry name" value="Mt_Rho_GTPase"/>
    <property type="match status" value="1"/>
</dbReference>
<dbReference type="PRINTS" id="PR00449">
    <property type="entry name" value="RASTRNSFRMNG"/>
</dbReference>
<dbReference type="SMART" id="SM00054">
    <property type="entry name" value="EFh"/>
    <property type="match status" value="2"/>
</dbReference>
<dbReference type="SMART" id="SM00175">
    <property type="entry name" value="RAB"/>
    <property type="match status" value="1"/>
</dbReference>
<dbReference type="SUPFAM" id="SSF47473">
    <property type="entry name" value="EF-hand"/>
    <property type="match status" value="1"/>
</dbReference>
<dbReference type="SUPFAM" id="SSF52540">
    <property type="entry name" value="P-loop containing nucleoside triphosphate hydrolases"/>
    <property type="match status" value="2"/>
</dbReference>
<dbReference type="PROSITE" id="PS00018">
    <property type="entry name" value="EF_HAND_1"/>
    <property type="match status" value="1"/>
</dbReference>
<dbReference type="PROSITE" id="PS50222">
    <property type="entry name" value="EF_HAND_2"/>
    <property type="match status" value="2"/>
</dbReference>
<dbReference type="PROSITE" id="PS51423">
    <property type="entry name" value="MIRO"/>
    <property type="match status" value="2"/>
</dbReference>
<accession>Q6C2J1</accession>
<protein>
    <recommendedName>
        <fullName>Mitochondrial Rho GTPase 1</fullName>
        <ecNumber>3.6.5.-</ecNumber>
    </recommendedName>
    <alternativeName>
        <fullName>GTPase EF-hand protein of mitochondria 1</fullName>
    </alternativeName>
</protein>
<name>GEM1_YARLI</name>